<proteinExistence type="predicted"/>
<sequence>MNIKTLCHPEYKRISVESLLNPVEETIDCEKPHSQTKINTAKPISASLYVTTNNTAVVQHNVQKRKGVTRRCPQCAVIKTSPQWREGPDGEVTLCNACGLFYRKIFLVFGKDLAKRYFNEIKGVSVKRKVPKSLYGVTRTR</sequence>
<organism>
    <name type="scientific">Saccharomyces cerevisiae (strain ATCC 204508 / S288c)</name>
    <name type="common">Baker's yeast</name>
    <dbReference type="NCBI Taxonomy" id="559292"/>
    <lineage>
        <taxon>Eukaryota</taxon>
        <taxon>Fungi</taxon>
        <taxon>Dikarya</taxon>
        <taxon>Ascomycota</taxon>
        <taxon>Saccharomycotina</taxon>
        <taxon>Saccharomycetes</taxon>
        <taxon>Saccharomycetales</taxon>
        <taxon>Saccharomycetaceae</taxon>
        <taxon>Saccharomyces</taxon>
    </lineage>
</organism>
<gene>
    <name type="primary">GAT3</name>
    <name type="ordered locus">YLR013W</name>
</gene>
<name>GAT3_YEAST</name>
<evidence type="ECO:0000255" key="1">
    <source>
        <dbReference type="PROSITE-ProRule" id="PRU00094"/>
    </source>
</evidence>
<reference key="1">
    <citation type="journal article" date="1997" name="Nature">
        <title>The nucleotide sequence of Saccharomyces cerevisiae chromosome XII.</title>
        <authorList>
            <person name="Johnston M."/>
            <person name="Hillier L.W."/>
            <person name="Riles L."/>
            <person name="Albermann K."/>
            <person name="Andre B."/>
            <person name="Ansorge W."/>
            <person name="Benes V."/>
            <person name="Brueckner M."/>
            <person name="Delius H."/>
            <person name="Dubois E."/>
            <person name="Duesterhoeft A."/>
            <person name="Entian K.-D."/>
            <person name="Floeth M."/>
            <person name="Goffeau A."/>
            <person name="Hebling U."/>
            <person name="Heumann K."/>
            <person name="Heuss-Neitzel D."/>
            <person name="Hilbert H."/>
            <person name="Hilger F."/>
            <person name="Kleine K."/>
            <person name="Koetter P."/>
            <person name="Louis E.J."/>
            <person name="Messenguy F."/>
            <person name="Mewes H.-W."/>
            <person name="Miosga T."/>
            <person name="Moestl D."/>
            <person name="Mueller-Auer S."/>
            <person name="Nentwich U."/>
            <person name="Obermaier B."/>
            <person name="Piravandi E."/>
            <person name="Pohl T.M."/>
            <person name="Portetelle D."/>
            <person name="Purnelle B."/>
            <person name="Rechmann S."/>
            <person name="Rieger M."/>
            <person name="Rinke M."/>
            <person name="Rose M."/>
            <person name="Scharfe M."/>
            <person name="Scherens B."/>
            <person name="Scholler P."/>
            <person name="Schwager C."/>
            <person name="Schwarz S."/>
            <person name="Underwood A.P."/>
            <person name="Urrestarazu L.A."/>
            <person name="Vandenbol M."/>
            <person name="Verhasselt P."/>
            <person name="Vierendeels F."/>
            <person name="Voet M."/>
            <person name="Volckaert G."/>
            <person name="Voss H."/>
            <person name="Wambutt R."/>
            <person name="Wedler E."/>
            <person name="Wedler H."/>
            <person name="Zimmermann F.K."/>
            <person name="Zollner A."/>
            <person name="Hani J."/>
            <person name="Hoheisel J.D."/>
        </authorList>
    </citation>
    <scope>NUCLEOTIDE SEQUENCE [LARGE SCALE GENOMIC DNA]</scope>
    <source>
        <strain>ATCC 204508 / S288c</strain>
    </source>
</reference>
<reference key="2">
    <citation type="journal article" date="2014" name="G3 (Bethesda)">
        <title>The reference genome sequence of Saccharomyces cerevisiae: Then and now.</title>
        <authorList>
            <person name="Engel S.R."/>
            <person name="Dietrich F.S."/>
            <person name="Fisk D.G."/>
            <person name="Binkley G."/>
            <person name="Balakrishnan R."/>
            <person name="Costanzo M.C."/>
            <person name="Dwight S.S."/>
            <person name="Hitz B.C."/>
            <person name="Karra K."/>
            <person name="Nash R.S."/>
            <person name="Weng S."/>
            <person name="Wong E.D."/>
            <person name="Lloyd P."/>
            <person name="Skrzypek M.S."/>
            <person name="Miyasato S.R."/>
            <person name="Simison M."/>
            <person name="Cherry J.M."/>
        </authorList>
    </citation>
    <scope>GENOME REANNOTATION</scope>
    <source>
        <strain>ATCC 204508 / S288c</strain>
    </source>
</reference>
<reference key="3">
    <citation type="journal article" date="2007" name="Genome Res.">
        <title>Approaching a complete repository of sequence-verified protein-encoding clones for Saccharomyces cerevisiae.</title>
        <authorList>
            <person name="Hu Y."/>
            <person name="Rolfs A."/>
            <person name="Bhullar B."/>
            <person name="Murthy T.V.S."/>
            <person name="Zhu C."/>
            <person name="Berger M.F."/>
            <person name="Camargo A.A."/>
            <person name="Kelley F."/>
            <person name="McCarron S."/>
            <person name="Jepson D."/>
            <person name="Richardson A."/>
            <person name="Raphael J."/>
            <person name="Moreira D."/>
            <person name="Taycher E."/>
            <person name="Zuo D."/>
            <person name="Mohr S."/>
            <person name="Kane M.F."/>
            <person name="Williamson J."/>
            <person name="Simpson A.J.G."/>
            <person name="Bulyk M.L."/>
            <person name="Harlow E."/>
            <person name="Marsischky G."/>
            <person name="Kolodner R.D."/>
            <person name="LaBaer J."/>
        </authorList>
    </citation>
    <scope>NUCLEOTIDE SEQUENCE [GENOMIC DNA]</scope>
    <source>
        <strain>ATCC 204508 / S288c</strain>
    </source>
</reference>
<reference key="4">
    <citation type="journal article" date="1999" name="Yeast">
        <title>Genome-wide transcriptional analysis in S. cerevisiae by mini-array membrane hybridization.</title>
        <authorList>
            <person name="Cox K.H."/>
            <person name="Pinchak A.B."/>
            <person name="Cooper T.G."/>
        </authorList>
    </citation>
    <scope>IDENTIFICATION</scope>
</reference>
<feature type="chain" id="PRO_0000083486" description="Protein GAT3">
    <location>
        <begin position="1"/>
        <end position="141"/>
    </location>
</feature>
<feature type="zinc finger region" description="GATA-type" evidence="1">
    <location>
        <begin position="72"/>
        <end position="98"/>
    </location>
</feature>
<accession>Q07928</accession>
<accession>D6VY15</accession>
<dbReference type="EMBL" id="Z73185">
    <property type="protein sequence ID" value="CAA97535.1"/>
    <property type="molecule type" value="Genomic_DNA"/>
</dbReference>
<dbReference type="EMBL" id="AY558530">
    <property type="protein sequence ID" value="AAS56856.1"/>
    <property type="molecule type" value="Genomic_DNA"/>
</dbReference>
<dbReference type="EMBL" id="BK006945">
    <property type="protein sequence ID" value="DAA09331.1"/>
    <property type="molecule type" value="Genomic_DNA"/>
</dbReference>
<dbReference type="PIR" id="S64835">
    <property type="entry name" value="S64835"/>
</dbReference>
<dbReference type="RefSeq" id="NP_013113.1">
    <property type="nucleotide sequence ID" value="NM_001181900.1"/>
</dbReference>
<dbReference type="SMR" id="Q07928"/>
<dbReference type="BioGRID" id="31287">
    <property type="interactions" value="31"/>
</dbReference>
<dbReference type="FunCoup" id="Q07928">
    <property type="interactions" value="630"/>
</dbReference>
<dbReference type="STRING" id="4932.YLR013W"/>
<dbReference type="iPTMnet" id="Q07928"/>
<dbReference type="PaxDb" id="4932-YLR013W"/>
<dbReference type="PeptideAtlas" id="Q07928"/>
<dbReference type="EnsemblFungi" id="YLR013W_mRNA">
    <property type="protein sequence ID" value="YLR013W"/>
    <property type="gene ID" value="YLR013W"/>
</dbReference>
<dbReference type="GeneID" id="850700"/>
<dbReference type="KEGG" id="sce:YLR013W"/>
<dbReference type="AGR" id="SGD:S000004003"/>
<dbReference type="SGD" id="S000004003">
    <property type="gene designation" value="GAT3"/>
</dbReference>
<dbReference type="VEuPathDB" id="FungiDB:YLR013W"/>
<dbReference type="eggNOG" id="KOG1601">
    <property type="taxonomic scope" value="Eukaryota"/>
</dbReference>
<dbReference type="GeneTree" id="ENSGT00940000180694"/>
<dbReference type="HOGENOM" id="CLU_1826405_0_0_1"/>
<dbReference type="InParanoid" id="Q07928"/>
<dbReference type="OrthoDB" id="2162994at2759"/>
<dbReference type="BioCyc" id="YEAST:G3O-32174-MONOMER"/>
<dbReference type="BioGRID-ORCS" id="850700">
    <property type="hits" value="4 hits in 13 CRISPR screens"/>
</dbReference>
<dbReference type="PRO" id="PR:Q07928"/>
<dbReference type="Proteomes" id="UP000002311">
    <property type="component" value="Chromosome XII"/>
</dbReference>
<dbReference type="RNAct" id="Q07928">
    <property type="molecule type" value="protein"/>
</dbReference>
<dbReference type="GO" id="GO:0043565">
    <property type="term" value="F:sequence-specific DNA binding"/>
    <property type="evidence" value="ECO:0000314"/>
    <property type="project" value="SGD"/>
</dbReference>
<dbReference type="GO" id="GO:0008270">
    <property type="term" value="F:zinc ion binding"/>
    <property type="evidence" value="ECO:0007669"/>
    <property type="project" value="UniProtKB-KW"/>
</dbReference>
<dbReference type="GO" id="GO:0006357">
    <property type="term" value="P:regulation of transcription by RNA polymerase II"/>
    <property type="evidence" value="ECO:0000250"/>
    <property type="project" value="SGD"/>
</dbReference>
<dbReference type="CDD" id="cd00202">
    <property type="entry name" value="ZnF_GATA"/>
    <property type="match status" value="1"/>
</dbReference>
<dbReference type="Gene3D" id="3.30.50.10">
    <property type="entry name" value="Erythroid Transcription Factor GATA-1, subunit A"/>
    <property type="match status" value="1"/>
</dbReference>
<dbReference type="InterPro" id="IPR051140">
    <property type="entry name" value="GATA_TF"/>
</dbReference>
<dbReference type="InterPro" id="IPR000679">
    <property type="entry name" value="Znf_GATA"/>
</dbReference>
<dbReference type="InterPro" id="IPR013088">
    <property type="entry name" value="Znf_NHR/GATA"/>
</dbReference>
<dbReference type="PANTHER" id="PTHR45658">
    <property type="entry name" value="GATA TRANSCRIPTION FACTOR"/>
    <property type="match status" value="1"/>
</dbReference>
<dbReference type="PANTHER" id="PTHR45658:SF149">
    <property type="entry name" value="PROTEIN GAT3-RELATED"/>
    <property type="match status" value="1"/>
</dbReference>
<dbReference type="Pfam" id="PF00320">
    <property type="entry name" value="GATA"/>
    <property type="match status" value="1"/>
</dbReference>
<dbReference type="SMART" id="SM00401">
    <property type="entry name" value="ZnF_GATA"/>
    <property type="match status" value="1"/>
</dbReference>
<dbReference type="SUPFAM" id="SSF57716">
    <property type="entry name" value="Glucocorticoid receptor-like (DNA-binding domain)"/>
    <property type="match status" value="1"/>
</dbReference>
<dbReference type="PROSITE" id="PS00344">
    <property type="entry name" value="GATA_ZN_FINGER_1"/>
    <property type="match status" value="1"/>
</dbReference>
<dbReference type="PROSITE" id="PS50114">
    <property type="entry name" value="GATA_ZN_FINGER_2"/>
    <property type="match status" value="1"/>
</dbReference>
<protein>
    <recommendedName>
        <fullName>Protein GAT3</fullName>
    </recommendedName>
</protein>
<keyword id="KW-0238">DNA-binding</keyword>
<keyword id="KW-0479">Metal-binding</keyword>
<keyword id="KW-1185">Reference proteome</keyword>
<keyword id="KW-0862">Zinc</keyword>
<keyword id="KW-0863">Zinc-finger</keyword>